<reference key="1">
    <citation type="submission" date="2006-03" db="EMBL/GenBank/DDBJ databases">
        <title>Complete sequence of Shewanella denitrificans OS217.</title>
        <authorList>
            <consortium name="US DOE Joint Genome Institute"/>
            <person name="Copeland A."/>
            <person name="Lucas S."/>
            <person name="Lapidus A."/>
            <person name="Barry K."/>
            <person name="Detter J.C."/>
            <person name="Glavina del Rio T."/>
            <person name="Hammon N."/>
            <person name="Israni S."/>
            <person name="Dalin E."/>
            <person name="Tice H."/>
            <person name="Pitluck S."/>
            <person name="Brettin T."/>
            <person name="Bruce D."/>
            <person name="Han C."/>
            <person name="Tapia R."/>
            <person name="Gilna P."/>
            <person name="Kiss H."/>
            <person name="Schmutz J."/>
            <person name="Larimer F."/>
            <person name="Land M."/>
            <person name="Hauser L."/>
            <person name="Kyrpides N."/>
            <person name="Lykidis A."/>
            <person name="Richardson P."/>
        </authorList>
    </citation>
    <scope>NUCLEOTIDE SEQUENCE [LARGE SCALE GENOMIC DNA]</scope>
    <source>
        <strain>OS217 / ATCC BAA-1090 / DSM 15013</strain>
    </source>
</reference>
<keyword id="KW-0143">Chaperone</keyword>
<keyword id="KW-0963">Cytoplasm</keyword>
<keyword id="KW-1185">Reference proteome</keyword>
<keyword id="KW-0690">Ribosome biogenesis</keyword>
<keyword id="KW-0698">rRNA processing</keyword>
<feature type="chain" id="PRO_0000321755" description="Ribosome maturation factor RimM">
    <location>
        <begin position="1"/>
        <end position="176"/>
    </location>
</feature>
<feature type="domain" description="PRC barrel" evidence="1">
    <location>
        <begin position="97"/>
        <end position="176"/>
    </location>
</feature>
<sequence length="176" mass="19920">MSDNQQPVVLGKLGSSHGIKGWLKITAYTDSVEGIFDYVPWLIKDQGVWREVKVTQWRFQGKAVVAELEGVTTREQAQMLTNCEIAILPEQMKELDDNDFYHRDLIGCEVTNVNGYNLGIVDQIVETGSNDVLLVKANAKDAFGKVERMIPFVTEQFIKQVDLQGKQIVVDWDPDF</sequence>
<proteinExistence type="inferred from homology"/>
<organism>
    <name type="scientific">Shewanella denitrificans (strain OS217 / ATCC BAA-1090 / DSM 15013)</name>
    <dbReference type="NCBI Taxonomy" id="318161"/>
    <lineage>
        <taxon>Bacteria</taxon>
        <taxon>Pseudomonadati</taxon>
        <taxon>Pseudomonadota</taxon>
        <taxon>Gammaproteobacteria</taxon>
        <taxon>Alteromonadales</taxon>
        <taxon>Shewanellaceae</taxon>
        <taxon>Shewanella</taxon>
    </lineage>
</organism>
<name>RIMM_SHEDO</name>
<gene>
    <name evidence="1" type="primary">rimM</name>
    <name type="ordered locus">Sden_2753</name>
</gene>
<protein>
    <recommendedName>
        <fullName evidence="1">Ribosome maturation factor RimM</fullName>
    </recommendedName>
</protein>
<dbReference type="EMBL" id="CP000302">
    <property type="protein sequence ID" value="ABE56032.1"/>
    <property type="molecule type" value="Genomic_DNA"/>
</dbReference>
<dbReference type="RefSeq" id="WP_011497182.1">
    <property type="nucleotide sequence ID" value="NC_007954.1"/>
</dbReference>
<dbReference type="SMR" id="Q12KJ4"/>
<dbReference type="STRING" id="318161.Sden_2753"/>
<dbReference type="KEGG" id="sdn:Sden_2753"/>
<dbReference type="eggNOG" id="COG0806">
    <property type="taxonomic scope" value="Bacteria"/>
</dbReference>
<dbReference type="HOGENOM" id="CLU_077636_1_0_6"/>
<dbReference type="OrthoDB" id="9783509at2"/>
<dbReference type="Proteomes" id="UP000001982">
    <property type="component" value="Chromosome"/>
</dbReference>
<dbReference type="GO" id="GO:0005737">
    <property type="term" value="C:cytoplasm"/>
    <property type="evidence" value="ECO:0007669"/>
    <property type="project" value="UniProtKB-SubCell"/>
</dbReference>
<dbReference type="GO" id="GO:0005840">
    <property type="term" value="C:ribosome"/>
    <property type="evidence" value="ECO:0007669"/>
    <property type="project" value="InterPro"/>
</dbReference>
<dbReference type="GO" id="GO:0043022">
    <property type="term" value="F:ribosome binding"/>
    <property type="evidence" value="ECO:0007669"/>
    <property type="project" value="InterPro"/>
</dbReference>
<dbReference type="GO" id="GO:0042274">
    <property type="term" value="P:ribosomal small subunit biogenesis"/>
    <property type="evidence" value="ECO:0007669"/>
    <property type="project" value="UniProtKB-UniRule"/>
</dbReference>
<dbReference type="GO" id="GO:0006364">
    <property type="term" value="P:rRNA processing"/>
    <property type="evidence" value="ECO:0007669"/>
    <property type="project" value="UniProtKB-UniRule"/>
</dbReference>
<dbReference type="Gene3D" id="2.30.30.240">
    <property type="entry name" value="PRC-barrel domain"/>
    <property type="match status" value="1"/>
</dbReference>
<dbReference type="Gene3D" id="2.40.30.60">
    <property type="entry name" value="RimM"/>
    <property type="match status" value="1"/>
</dbReference>
<dbReference type="HAMAP" id="MF_00014">
    <property type="entry name" value="Ribosome_mat_RimM"/>
    <property type="match status" value="1"/>
</dbReference>
<dbReference type="InterPro" id="IPR011033">
    <property type="entry name" value="PRC_barrel-like_sf"/>
</dbReference>
<dbReference type="InterPro" id="IPR056792">
    <property type="entry name" value="PRC_RimM"/>
</dbReference>
<dbReference type="InterPro" id="IPR011961">
    <property type="entry name" value="RimM"/>
</dbReference>
<dbReference type="InterPro" id="IPR002676">
    <property type="entry name" value="RimM_N"/>
</dbReference>
<dbReference type="InterPro" id="IPR036976">
    <property type="entry name" value="RimM_N_sf"/>
</dbReference>
<dbReference type="InterPro" id="IPR009000">
    <property type="entry name" value="Transl_B-barrel_sf"/>
</dbReference>
<dbReference type="NCBIfam" id="TIGR02273">
    <property type="entry name" value="16S_RimM"/>
    <property type="match status" value="1"/>
</dbReference>
<dbReference type="PANTHER" id="PTHR33692">
    <property type="entry name" value="RIBOSOME MATURATION FACTOR RIMM"/>
    <property type="match status" value="1"/>
</dbReference>
<dbReference type="PANTHER" id="PTHR33692:SF1">
    <property type="entry name" value="RIBOSOME MATURATION FACTOR RIMM"/>
    <property type="match status" value="1"/>
</dbReference>
<dbReference type="Pfam" id="PF24986">
    <property type="entry name" value="PRC_RimM"/>
    <property type="match status" value="1"/>
</dbReference>
<dbReference type="Pfam" id="PF01782">
    <property type="entry name" value="RimM"/>
    <property type="match status" value="1"/>
</dbReference>
<dbReference type="SUPFAM" id="SSF50346">
    <property type="entry name" value="PRC-barrel domain"/>
    <property type="match status" value="1"/>
</dbReference>
<dbReference type="SUPFAM" id="SSF50447">
    <property type="entry name" value="Translation proteins"/>
    <property type="match status" value="1"/>
</dbReference>
<comment type="function">
    <text evidence="1">An accessory protein needed during the final step in the assembly of 30S ribosomal subunit, possibly for assembly of the head region. Essential for efficient processing of 16S rRNA. May be needed both before and after RbfA during the maturation of 16S rRNA. It has affinity for free ribosomal 30S subunits but not for 70S ribosomes.</text>
</comment>
<comment type="subunit">
    <text evidence="1">Binds ribosomal protein uS19.</text>
</comment>
<comment type="subcellular location">
    <subcellularLocation>
        <location evidence="1">Cytoplasm</location>
    </subcellularLocation>
</comment>
<comment type="domain">
    <text evidence="1">The PRC barrel domain binds ribosomal protein uS19.</text>
</comment>
<comment type="similarity">
    <text evidence="1">Belongs to the RimM family.</text>
</comment>
<accession>Q12KJ4</accession>
<evidence type="ECO:0000255" key="1">
    <source>
        <dbReference type="HAMAP-Rule" id="MF_00014"/>
    </source>
</evidence>